<gene>
    <name evidence="1" type="primary">eno</name>
    <name type="ordered locus">CKL_3378</name>
</gene>
<dbReference type="EC" id="4.2.1.11" evidence="1"/>
<dbReference type="EMBL" id="CP000673">
    <property type="protein sequence ID" value="EDK35381.1"/>
    <property type="molecule type" value="Genomic_DNA"/>
</dbReference>
<dbReference type="RefSeq" id="WP_012103711.1">
    <property type="nucleotide sequence ID" value="NC_009706.1"/>
</dbReference>
<dbReference type="SMR" id="A5N2N5"/>
<dbReference type="STRING" id="431943.CKL_3378"/>
<dbReference type="KEGG" id="ckl:CKL_3378"/>
<dbReference type="eggNOG" id="COG0148">
    <property type="taxonomic scope" value="Bacteria"/>
</dbReference>
<dbReference type="HOGENOM" id="CLU_031223_2_1_9"/>
<dbReference type="UniPathway" id="UPA00109">
    <property type="reaction ID" value="UER00187"/>
</dbReference>
<dbReference type="Proteomes" id="UP000002411">
    <property type="component" value="Chromosome"/>
</dbReference>
<dbReference type="GO" id="GO:0009986">
    <property type="term" value="C:cell surface"/>
    <property type="evidence" value="ECO:0007669"/>
    <property type="project" value="UniProtKB-SubCell"/>
</dbReference>
<dbReference type="GO" id="GO:0005576">
    <property type="term" value="C:extracellular region"/>
    <property type="evidence" value="ECO:0007669"/>
    <property type="project" value="UniProtKB-SubCell"/>
</dbReference>
<dbReference type="GO" id="GO:0000015">
    <property type="term" value="C:phosphopyruvate hydratase complex"/>
    <property type="evidence" value="ECO:0007669"/>
    <property type="project" value="InterPro"/>
</dbReference>
<dbReference type="GO" id="GO:0000287">
    <property type="term" value="F:magnesium ion binding"/>
    <property type="evidence" value="ECO:0007669"/>
    <property type="project" value="UniProtKB-UniRule"/>
</dbReference>
<dbReference type="GO" id="GO:0004634">
    <property type="term" value="F:phosphopyruvate hydratase activity"/>
    <property type="evidence" value="ECO:0007669"/>
    <property type="project" value="UniProtKB-UniRule"/>
</dbReference>
<dbReference type="GO" id="GO:0006096">
    <property type="term" value="P:glycolytic process"/>
    <property type="evidence" value="ECO:0007669"/>
    <property type="project" value="UniProtKB-UniRule"/>
</dbReference>
<dbReference type="CDD" id="cd03313">
    <property type="entry name" value="enolase"/>
    <property type="match status" value="1"/>
</dbReference>
<dbReference type="FunFam" id="3.20.20.120:FF:000001">
    <property type="entry name" value="Enolase"/>
    <property type="match status" value="1"/>
</dbReference>
<dbReference type="FunFam" id="3.30.390.10:FF:000001">
    <property type="entry name" value="Enolase"/>
    <property type="match status" value="1"/>
</dbReference>
<dbReference type="Gene3D" id="3.20.20.120">
    <property type="entry name" value="Enolase-like C-terminal domain"/>
    <property type="match status" value="1"/>
</dbReference>
<dbReference type="Gene3D" id="3.30.390.10">
    <property type="entry name" value="Enolase-like, N-terminal domain"/>
    <property type="match status" value="1"/>
</dbReference>
<dbReference type="HAMAP" id="MF_00318">
    <property type="entry name" value="Enolase"/>
    <property type="match status" value="1"/>
</dbReference>
<dbReference type="InterPro" id="IPR000941">
    <property type="entry name" value="Enolase"/>
</dbReference>
<dbReference type="InterPro" id="IPR036849">
    <property type="entry name" value="Enolase-like_C_sf"/>
</dbReference>
<dbReference type="InterPro" id="IPR029017">
    <property type="entry name" value="Enolase-like_N"/>
</dbReference>
<dbReference type="InterPro" id="IPR020810">
    <property type="entry name" value="Enolase_C"/>
</dbReference>
<dbReference type="InterPro" id="IPR020809">
    <property type="entry name" value="Enolase_CS"/>
</dbReference>
<dbReference type="InterPro" id="IPR020811">
    <property type="entry name" value="Enolase_N"/>
</dbReference>
<dbReference type="NCBIfam" id="TIGR01060">
    <property type="entry name" value="eno"/>
    <property type="match status" value="1"/>
</dbReference>
<dbReference type="PANTHER" id="PTHR11902">
    <property type="entry name" value="ENOLASE"/>
    <property type="match status" value="1"/>
</dbReference>
<dbReference type="PANTHER" id="PTHR11902:SF1">
    <property type="entry name" value="ENOLASE"/>
    <property type="match status" value="1"/>
</dbReference>
<dbReference type="Pfam" id="PF00113">
    <property type="entry name" value="Enolase_C"/>
    <property type="match status" value="1"/>
</dbReference>
<dbReference type="Pfam" id="PF03952">
    <property type="entry name" value="Enolase_N"/>
    <property type="match status" value="1"/>
</dbReference>
<dbReference type="PIRSF" id="PIRSF001400">
    <property type="entry name" value="Enolase"/>
    <property type="match status" value="1"/>
</dbReference>
<dbReference type="PRINTS" id="PR00148">
    <property type="entry name" value="ENOLASE"/>
</dbReference>
<dbReference type="SFLD" id="SFLDF00002">
    <property type="entry name" value="enolase"/>
    <property type="match status" value="1"/>
</dbReference>
<dbReference type="SFLD" id="SFLDG00178">
    <property type="entry name" value="enolase"/>
    <property type="match status" value="1"/>
</dbReference>
<dbReference type="SMART" id="SM01192">
    <property type="entry name" value="Enolase_C"/>
    <property type="match status" value="1"/>
</dbReference>
<dbReference type="SMART" id="SM01193">
    <property type="entry name" value="Enolase_N"/>
    <property type="match status" value="1"/>
</dbReference>
<dbReference type="SUPFAM" id="SSF51604">
    <property type="entry name" value="Enolase C-terminal domain-like"/>
    <property type="match status" value="1"/>
</dbReference>
<dbReference type="SUPFAM" id="SSF54826">
    <property type="entry name" value="Enolase N-terminal domain-like"/>
    <property type="match status" value="1"/>
</dbReference>
<dbReference type="PROSITE" id="PS00164">
    <property type="entry name" value="ENOLASE"/>
    <property type="match status" value="1"/>
</dbReference>
<comment type="function">
    <text evidence="1">Catalyzes the reversible conversion of 2-phosphoglycerate (2-PG) into phosphoenolpyruvate (PEP). It is essential for the degradation of carbohydrates via glycolysis.</text>
</comment>
<comment type="catalytic activity">
    <reaction evidence="1">
        <text>(2R)-2-phosphoglycerate = phosphoenolpyruvate + H2O</text>
        <dbReference type="Rhea" id="RHEA:10164"/>
        <dbReference type="ChEBI" id="CHEBI:15377"/>
        <dbReference type="ChEBI" id="CHEBI:58289"/>
        <dbReference type="ChEBI" id="CHEBI:58702"/>
        <dbReference type="EC" id="4.2.1.11"/>
    </reaction>
</comment>
<comment type="cofactor">
    <cofactor evidence="1">
        <name>Mg(2+)</name>
        <dbReference type="ChEBI" id="CHEBI:18420"/>
    </cofactor>
    <text evidence="1">Binds a second Mg(2+) ion via substrate during catalysis.</text>
</comment>
<comment type="pathway">
    <text evidence="1">Carbohydrate degradation; glycolysis; pyruvate from D-glyceraldehyde 3-phosphate: step 4/5.</text>
</comment>
<comment type="subcellular location">
    <subcellularLocation>
        <location evidence="1">Cytoplasm</location>
    </subcellularLocation>
    <subcellularLocation>
        <location evidence="1">Secreted</location>
    </subcellularLocation>
    <subcellularLocation>
        <location evidence="1">Cell surface</location>
    </subcellularLocation>
    <text evidence="1">Fractions of enolase are present in both the cytoplasm and on the cell surface.</text>
</comment>
<comment type="similarity">
    <text evidence="1">Belongs to the enolase family.</text>
</comment>
<protein>
    <recommendedName>
        <fullName evidence="1">Enolase</fullName>
        <ecNumber evidence="1">4.2.1.11</ecNumber>
    </recommendedName>
    <alternativeName>
        <fullName evidence="1">2-phospho-D-glycerate hydro-lyase</fullName>
    </alternativeName>
    <alternativeName>
        <fullName evidence="1">2-phosphoglycerate dehydratase</fullName>
    </alternativeName>
</protein>
<reference key="1">
    <citation type="journal article" date="2008" name="Proc. Natl. Acad. Sci. U.S.A.">
        <title>The genome of Clostridium kluyveri, a strict anaerobe with unique metabolic features.</title>
        <authorList>
            <person name="Seedorf H."/>
            <person name="Fricke W.F."/>
            <person name="Veith B."/>
            <person name="Brueggemann H."/>
            <person name="Liesegang H."/>
            <person name="Strittmatter A."/>
            <person name="Miethke M."/>
            <person name="Buckel W."/>
            <person name="Hinderberger J."/>
            <person name="Li F."/>
            <person name="Hagemeier C."/>
            <person name="Thauer R.K."/>
            <person name="Gottschalk G."/>
        </authorList>
    </citation>
    <scope>NUCLEOTIDE SEQUENCE [LARGE SCALE GENOMIC DNA]</scope>
    <source>
        <strain>ATCC 8527 / DSM 555 / NBRC 12016 / NCIMB 10680 / K1</strain>
    </source>
</reference>
<evidence type="ECO:0000255" key="1">
    <source>
        <dbReference type="HAMAP-Rule" id="MF_00318"/>
    </source>
</evidence>
<keyword id="KW-0963">Cytoplasm</keyword>
<keyword id="KW-0324">Glycolysis</keyword>
<keyword id="KW-0456">Lyase</keyword>
<keyword id="KW-0460">Magnesium</keyword>
<keyword id="KW-0479">Metal-binding</keyword>
<keyword id="KW-1185">Reference proteome</keyword>
<keyword id="KW-0964">Secreted</keyword>
<proteinExistence type="inferred from homology"/>
<accession>A5N2N5</accession>
<name>ENO_CLOK5</name>
<feature type="chain" id="PRO_1000079129" description="Enolase">
    <location>
        <begin position="1"/>
        <end position="430"/>
    </location>
</feature>
<feature type="active site" description="Proton donor" evidence="1">
    <location>
        <position position="208"/>
    </location>
</feature>
<feature type="active site" description="Proton acceptor" evidence="1">
    <location>
        <position position="340"/>
    </location>
</feature>
<feature type="binding site" evidence="1">
    <location>
        <position position="166"/>
    </location>
    <ligand>
        <name>(2R)-2-phosphoglycerate</name>
        <dbReference type="ChEBI" id="CHEBI:58289"/>
    </ligand>
</feature>
<feature type="binding site" evidence="1">
    <location>
        <position position="245"/>
    </location>
    <ligand>
        <name>Mg(2+)</name>
        <dbReference type="ChEBI" id="CHEBI:18420"/>
    </ligand>
</feature>
<feature type="binding site" evidence="1">
    <location>
        <position position="288"/>
    </location>
    <ligand>
        <name>Mg(2+)</name>
        <dbReference type="ChEBI" id="CHEBI:18420"/>
    </ligand>
</feature>
<feature type="binding site" evidence="1">
    <location>
        <position position="315"/>
    </location>
    <ligand>
        <name>Mg(2+)</name>
        <dbReference type="ChEBI" id="CHEBI:18420"/>
    </ligand>
</feature>
<feature type="binding site" evidence="1">
    <location>
        <position position="340"/>
    </location>
    <ligand>
        <name>(2R)-2-phosphoglycerate</name>
        <dbReference type="ChEBI" id="CHEBI:58289"/>
    </ligand>
</feature>
<feature type="binding site" evidence="1">
    <location>
        <position position="369"/>
    </location>
    <ligand>
        <name>(2R)-2-phosphoglycerate</name>
        <dbReference type="ChEBI" id="CHEBI:58289"/>
    </ligand>
</feature>
<feature type="binding site" evidence="1">
    <location>
        <position position="370"/>
    </location>
    <ligand>
        <name>(2R)-2-phosphoglycerate</name>
        <dbReference type="ChEBI" id="CHEBI:58289"/>
    </ligand>
</feature>
<feature type="binding site" evidence="1">
    <location>
        <position position="391"/>
    </location>
    <ligand>
        <name>(2R)-2-phosphoglycerate</name>
        <dbReference type="ChEBI" id="CHEBI:58289"/>
    </ligand>
</feature>
<sequence>MRNYVEIVDVTARQILDSRANPTVEVEVILEDGTEGRAAVPSGASTGAFEAVELRDEDKEKYMGKGVLKAVENVNNYIAEELIGMNVFDQVLIDKTMLELDGTHNKGKLGANATLGVSLACARAAAKYLGLSLYQYIGGVNAKVLPVPMMNIVNGGKHADNNVDLQEFMIMPVGAPSFTEALRMSSEVYHTLKSLLKSKGQDTGVGDEGGFAPNLNSNEEAIQIIVEAVEKAGYVPGKDIFIALDPASTEIYEDGKYNLKSEGKVLSSEEMVDYYVTLVNKYPIISIEDAMAEEDWEGWSILTEKLGDKVQLVGDDLFVTNTERLKKGIDKKVANSILIKLNQIGTLTETLNAIEMAERAGYTAVVSHRSGETEDTTIADLVVAVNAGQIKTGAPARSERVAKYNQLLRIEEELGETAEYRGLNTFYNIK</sequence>
<organism>
    <name type="scientific">Clostridium kluyveri (strain ATCC 8527 / DSM 555 / NBRC 12016 / NCIMB 10680 / K1)</name>
    <dbReference type="NCBI Taxonomy" id="431943"/>
    <lineage>
        <taxon>Bacteria</taxon>
        <taxon>Bacillati</taxon>
        <taxon>Bacillota</taxon>
        <taxon>Clostridia</taxon>
        <taxon>Eubacteriales</taxon>
        <taxon>Clostridiaceae</taxon>
        <taxon>Clostridium</taxon>
    </lineage>
</organism>